<reference key="1">
    <citation type="journal article" date="2011" name="MBio">
        <title>Novel metabolic attributes of the genus Cyanothece, comprising a group of unicellular nitrogen-fixing Cyanobacteria.</title>
        <authorList>
            <person name="Bandyopadhyay A."/>
            <person name="Elvitigala T."/>
            <person name="Welsh E."/>
            <person name="Stockel J."/>
            <person name="Liberton M."/>
            <person name="Min H."/>
            <person name="Sherman L.A."/>
            <person name="Pakrasi H.B."/>
        </authorList>
    </citation>
    <scope>NUCLEOTIDE SEQUENCE [LARGE SCALE GENOMIC DNA]</scope>
    <source>
        <strain>PCC 7425 / ATCC 29141</strain>
    </source>
</reference>
<gene>
    <name evidence="1" type="primary">rph</name>
    <name type="ordered locus">Cyan7425_5092</name>
</gene>
<protein>
    <recommendedName>
        <fullName evidence="1">Ribonuclease PH</fullName>
        <shortName evidence="1">RNase PH</shortName>
        <ecNumber evidence="1">2.7.7.56</ecNumber>
    </recommendedName>
    <alternativeName>
        <fullName evidence="1">tRNA nucleotidyltransferase</fullName>
    </alternativeName>
</protein>
<evidence type="ECO:0000255" key="1">
    <source>
        <dbReference type="HAMAP-Rule" id="MF_00564"/>
    </source>
</evidence>
<proteinExistence type="inferred from homology"/>
<name>RNPH_CYAP4</name>
<comment type="function">
    <text evidence="1">Phosphorolytic 3'-5' exoribonuclease that plays an important role in tRNA 3'-end maturation. Removes nucleotide residues following the 3'-CCA terminus of tRNAs; can also add nucleotides to the ends of RNA molecules by using nucleoside diphosphates as substrates, but this may not be physiologically important. Probably plays a role in initiation of 16S rRNA degradation (leading to ribosome degradation) during starvation.</text>
</comment>
<comment type="catalytic activity">
    <reaction evidence="1">
        <text>tRNA(n+1) + phosphate = tRNA(n) + a ribonucleoside 5'-diphosphate</text>
        <dbReference type="Rhea" id="RHEA:10628"/>
        <dbReference type="Rhea" id="RHEA-COMP:17343"/>
        <dbReference type="Rhea" id="RHEA-COMP:17344"/>
        <dbReference type="ChEBI" id="CHEBI:43474"/>
        <dbReference type="ChEBI" id="CHEBI:57930"/>
        <dbReference type="ChEBI" id="CHEBI:173114"/>
        <dbReference type="EC" id="2.7.7.56"/>
    </reaction>
</comment>
<comment type="subunit">
    <text evidence="1">Homohexameric ring arranged as a trimer of dimers.</text>
</comment>
<comment type="similarity">
    <text evidence="1">Belongs to the RNase PH family.</text>
</comment>
<accession>B8HPC6</accession>
<organism>
    <name type="scientific">Cyanothece sp. (strain PCC 7425 / ATCC 29141)</name>
    <dbReference type="NCBI Taxonomy" id="395961"/>
    <lineage>
        <taxon>Bacteria</taxon>
        <taxon>Bacillati</taxon>
        <taxon>Cyanobacteriota</taxon>
        <taxon>Cyanophyceae</taxon>
        <taxon>Gomontiellales</taxon>
        <taxon>Cyanothecaceae</taxon>
        <taxon>Cyanothece</taxon>
    </lineage>
</organism>
<sequence length="239" mass="26216">MGWQRPDGRQSHQLRPISFERGFTRFAAGSVLTRCGQTQVLCNVTVRPGVPKFLEGRGQGWLTAEYRMLPAATPQRQEREMLKLSGRTQEIQRLIGRSLRAALDFDLLGERTLVVDADVLQADAGTRTTAITGSFVALADAIDQLLQAGELQRSPIRNYVAAVSVGLLEGEPFLDLSYQEDVAASVDFNVVMTESLQILELQGTAEGESFSRTQLNQILDVAEVGIRELIAAQKSVLGQ</sequence>
<keyword id="KW-0548">Nucleotidyltransferase</keyword>
<keyword id="KW-0694">RNA-binding</keyword>
<keyword id="KW-0698">rRNA processing</keyword>
<keyword id="KW-0808">Transferase</keyword>
<keyword id="KW-0819">tRNA processing</keyword>
<keyword id="KW-0820">tRNA-binding</keyword>
<dbReference type="EC" id="2.7.7.56" evidence="1"/>
<dbReference type="EMBL" id="CP001344">
    <property type="protein sequence ID" value="ACL47386.1"/>
    <property type="molecule type" value="Genomic_DNA"/>
</dbReference>
<dbReference type="SMR" id="B8HPC6"/>
<dbReference type="STRING" id="395961.Cyan7425_5092"/>
<dbReference type="KEGG" id="cyn:Cyan7425_5092"/>
<dbReference type="eggNOG" id="COG0689">
    <property type="taxonomic scope" value="Bacteria"/>
</dbReference>
<dbReference type="HOGENOM" id="CLU_050858_0_0_3"/>
<dbReference type="OrthoDB" id="9802265at2"/>
<dbReference type="GO" id="GO:0000175">
    <property type="term" value="F:3'-5'-RNA exonuclease activity"/>
    <property type="evidence" value="ECO:0007669"/>
    <property type="project" value="UniProtKB-UniRule"/>
</dbReference>
<dbReference type="GO" id="GO:0000049">
    <property type="term" value="F:tRNA binding"/>
    <property type="evidence" value="ECO:0007669"/>
    <property type="project" value="UniProtKB-UniRule"/>
</dbReference>
<dbReference type="GO" id="GO:0009022">
    <property type="term" value="F:tRNA nucleotidyltransferase activity"/>
    <property type="evidence" value="ECO:0007669"/>
    <property type="project" value="UniProtKB-UniRule"/>
</dbReference>
<dbReference type="GO" id="GO:0016075">
    <property type="term" value="P:rRNA catabolic process"/>
    <property type="evidence" value="ECO:0007669"/>
    <property type="project" value="UniProtKB-UniRule"/>
</dbReference>
<dbReference type="GO" id="GO:0006364">
    <property type="term" value="P:rRNA processing"/>
    <property type="evidence" value="ECO:0007669"/>
    <property type="project" value="UniProtKB-KW"/>
</dbReference>
<dbReference type="GO" id="GO:0008033">
    <property type="term" value="P:tRNA processing"/>
    <property type="evidence" value="ECO:0007669"/>
    <property type="project" value="UniProtKB-UniRule"/>
</dbReference>
<dbReference type="CDD" id="cd11362">
    <property type="entry name" value="RNase_PH_bact"/>
    <property type="match status" value="1"/>
</dbReference>
<dbReference type="FunFam" id="3.30.230.70:FF:000003">
    <property type="entry name" value="Ribonuclease PH"/>
    <property type="match status" value="1"/>
</dbReference>
<dbReference type="Gene3D" id="3.30.230.70">
    <property type="entry name" value="GHMP Kinase, N-terminal domain"/>
    <property type="match status" value="1"/>
</dbReference>
<dbReference type="HAMAP" id="MF_00564">
    <property type="entry name" value="RNase_PH"/>
    <property type="match status" value="1"/>
</dbReference>
<dbReference type="InterPro" id="IPR001247">
    <property type="entry name" value="ExoRNase_PH_dom1"/>
</dbReference>
<dbReference type="InterPro" id="IPR015847">
    <property type="entry name" value="ExoRNase_PH_dom2"/>
</dbReference>
<dbReference type="InterPro" id="IPR036345">
    <property type="entry name" value="ExoRNase_PH_dom2_sf"/>
</dbReference>
<dbReference type="InterPro" id="IPR027408">
    <property type="entry name" value="PNPase/RNase_PH_dom_sf"/>
</dbReference>
<dbReference type="InterPro" id="IPR020568">
    <property type="entry name" value="Ribosomal_Su5_D2-typ_SF"/>
</dbReference>
<dbReference type="InterPro" id="IPR050080">
    <property type="entry name" value="RNase_PH"/>
</dbReference>
<dbReference type="InterPro" id="IPR002381">
    <property type="entry name" value="RNase_PH_bac-type"/>
</dbReference>
<dbReference type="InterPro" id="IPR018336">
    <property type="entry name" value="RNase_PH_CS"/>
</dbReference>
<dbReference type="NCBIfam" id="TIGR01966">
    <property type="entry name" value="RNasePH"/>
    <property type="match status" value="1"/>
</dbReference>
<dbReference type="PANTHER" id="PTHR11953">
    <property type="entry name" value="EXOSOME COMPLEX COMPONENT"/>
    <property type="match status" value="1"/>
</dbReference>
<dbReference type="PANTHER" id="PTHR11953:SF0">
    <property type="entry name" value="EXOSOME COMPLEX COMPONENT RRP41"/>
    <property type="match status" value="1"/>
</dbReference>
<dbReference type="Pfam" id="PF01138">
    <property type="entry name" value="RNase_PH"/>
    <property type="match status" value="1"/>
</dbReference>
<dbReference type="Pfam" id="PF03725">
    <property type="entry name" value="RNase_PH_C"/>
    <property type="match status" value="1"/>
</dbReference>
<dbReference type="SUPFAM" id="SSF55666">
    <property type="entry name" value="Ribonuclease PH domain 2-like"/>
    <property type="match status" value="1"/>
</dbReference>
<dbReference type="SUPFAM" id="SSF54211">
    <property type="entry name" value="Ribosomal protein S5 domain 2-like"/>
    <property type="match status" value="1"/>
</dbReference>
<dbReference type="PROSITE" id="PS01277">
    <property type="entry name" value="RIBONUCLEASE_PH"/>
    <property type="match status" value="1"/>
</dbReference>
<feature type="chain" id="PRO_1000146773" description="Ribonuclease PH">
    <location>
        <begin position="1"/>
        <end position="239"/>
    </location>
</feature>
<feature type="binding site" evidence="1">
    <location>
        <position position="87"/>
    </location>
    <ligand>
        <name>phosphate</name>
        <dbReference type="ChEBI" id="CHEBI:43474"/>
        <note>substrate</note>
    </ligand>
</feature>
<feature type="binding site" evidence="1">
    <location>
        <begin position="125"/>
        <end position="127"/>
    </location>
    <ligand>
        <name>phosphate</name>
        <dbReference type="ChEBI" id="CHEBI:43474"/>
        <note>substrate</note>
    </ligand>
</feature>